<proteinExistence type="evidence at transcript level"/>
<organism>
    <name type="scientific">Arabidopsis thaliana</name>
    <name type="common">Mouse-ear cress</name>
    <dbReference type="NCBI Taxonomy" id="3702"/>
    <lineage>
        <taxon>Eukaryota</taxon>
        <taxon>Viridiplantae</taxon>
        <taxon>Streptophyta</taxon>
        <taxon>Embryophyta</taxon>
        <taxon>Tracheophyta</taxon>
        <taxon>Spermatophyta</taxon>
        <taxon>Magnoliopsida</taxon>
        <taxon>eudicotyledons</taxon>
        <taxon>Gunneridae</taxon>
        <taxon>Pentapetalae</taxon>
        <taxon>rosids</taxon>
        <taxon>malvids</taxon>
        <taxon>Brassicales</taxon>
        <taxon>Brassicaceae</taxon>
        <taxon>Camelineae</taxon>
        <taxon>Arabidopsis</taxon>
    </lineage>
</organism>
<gene>
    <name type="primary">ZIP12</name>
    <name type="ordered locus">At5g62160</name>
    <name type="ORF">MTG10.19</name>
</gene>
<protein>
    <recommendedName>
        <fullName>Probable zinc transporter 12</fullName>
    </recommendedName>
    <alternativeName>
        <fullName>ZRT/IRT-like protein 12</fullName>
    </alternativeName>
</protein>
<comment type="function">
    <text evidence="3">Zinc transporter involved in zinc uptake in roots. Targeted by BZIP23 transcription factor in response to zinc-deficient conditions.</text>
</comment>
<comment type="subcellular location">
    <subcellularLocation>
        <location evidence="4">Cell membrane</location>
        <topology evidence="4">Multi-pass membrane protein</topology>
    </subcellularLocation>
</comment>
<comment type="induction">
    <text evidence="3">By zinc-deficiency.</text>
</comment>
<comment type="similarity">
    <text evidence="4">Belongs to the ZIP transporter (TC 2.A.5) family.</text>
</comment>
<feature type="signal peptide" evidence="1">
    <location>
        <begin position="1"/>
        <end position="25"/>
    </location>
</feature>
<feature type="chain" id="PRO_0000041649" description="Probable zinc transporter 12">
    <location>
        <begin position="26"/>
        <end position="355"/>
    </location>
</feature>
<feature type="topological domain" description="Extracellular" evidence="1">
    <location>
        <begin position="26"/>
        <end position="50"/>
    </location>
</feature>
<feature type="transmembrane region" description="Helical" evidence="1">
    <location>
        <begin position="51"/>
        <end position="71"/>
    </location>
</feature>
<feature type="topological domain" description="Cytoplasmic" evidence="1">
    <location>
        <begin position="72"/>
        <end position="77"/>
    </location>
</feature>
<feature type="transmembrane region" description="Helical" evidence="1">
    <location>
        <begin position="78"/>
        <end position="98"/>
    </location>
</feature>
<feature type="topological domain" description="Extracellular" evidence="1">
    <location>
        <begin position="99"/>
        <end position="116"/>
    </location>
</feature>
<feature type="transmembrane region" description="Helical" evidence="1">
    <location>
        <begin position="117"/>
        <end position="137"/>
    </location>
</feature>
<feature type="topological domain" description="Cytoplasmic" evidence="1">
    <location>
        <begin position="138"/>
        <end position="200"/>
    </location>
</feature>
<feature type="transmembrane region" description="Helical" evidence="1">
    <location>
        <begin position="201"/>
        <end position="221"/>
    </location>
</feature>
<feature type="topological domain" description="Extracellular" evidence="1">
    <location>
        <begin position="222"/>
        <end position="231"/>
    </location>
</feature>
<feature type="transmembrane region" description="Helical" evidence="1">
    <location>
        <begin position="232"/>
        <end position="252"/>
    </location>
</feature>
<feature type="topological domain" description="Cytoplasmic" evidence="1">
    <location>
        <begin position="253"/>
        <end position="261"/>
    </location>
</feature>
<feature type="transmembrane region" description="Helical" evidence="1">
    <location>
        <begin position="262"/>
        <end position="282"/>
    </location>
</feature>
<feature type="topological domain" description="Extracellular" evidence="1">
    <location>
        <begin position="283"/>
        <end position="302"/>
    </location>
</feature>
<feature type="transmembrane region" description="Helical" evidence="1">
    <location>
        <begin position="303"/>
        <end position="323"/>
    </location>
</feature>
<feature type="topological domain" description="Cytoplasmic" evidence="1">
    <location>
        <begin position="324"/>
        <end position="334"/>
    </location>
</feature>
<feature type="transmembrane region" description="Helical" evidence="1">
    <location>
        <begin position="335"/>
        <end position="355"/>
    </location>
</feature>
<feature type="region of interest" description="Disordered" evidence="2">
    <location>
        <begin position="156"/>
        <end position="183"/>
    </location>
</feature>
<evidence type="ECO:0000255" key="1"/>
<evidence type="ECO:0000256" key="2">
    <source>
        <dbReference type="SAM" id="MobiDB-lite"/>
    </source>
</evidence>
<evidence type="ECO:0000269" key="3">
    <source>
    </source>
</evidence>
<evidence type="ECO:0000305" key="4"/>
<sequence length="355" mass="37571">MSRFRKTLVSAFVLCLVIFPLLVSAAEEENQCGGSKGGSAAEKASALKYKIIAFFSILIAGVFGVCLPIFGLKTESNFFMYVKAFAAGVILATGFVHILPDATESLTSSCLGEEPPWGDFPMTGLVAMAASILTMLIESFASGYLNRSRLAKEGKTLPVSTGGEEEHAHTGSAHTHASQGHSHGSLLIPQDDDHIDMRKKIVTQILELGIVVHSVIIGISLGASPSVSTIKPLIAAITFHQLFEGFGLGGCISEAKFRVKKIWVMLMFFALTAPIGIGIGIGVAEIYNENSPMALKVSGFLNATASGILIYMALVDLVAPLFMNQKTQSSMKIQVACSVSLVVGAGLMSLLAIWA</sequence>
<dbReference type="EMBL" id="AF369914">
    <property type="protein sequence ID" value="AAL38437.1"/>
    <property type="molecule type" value="Genomic_DNA"/>
</dbReference>
<dbReference type="EMBL" id="AB016880">
    <property type="protein sequence ID" value="BAB10178.1"/>
    <property type="molecule type" value="Genomic_DNA"/>
</dbReference>
<dbReference type="EMBL" id="CP002688">
    <property type="protein sequence ID" value="AED97571.1"/>
    <property type="molecule type" value="Genomic_DNA"/>
</dbReference>
<dbReference type="RefSeq" id="NP_201022.1">
    <property type="nucleotide sequence ID" value="NM_125609.2"/>
</dbReference>
<dbReference type="SMR" id="Q9FIS2"/>
<dbReference type="FunCoup" id="Q9FIS2">
    <property type="interactions" value="2472"/>
</dbReference>
<dbReference type="STRING" id="3702.Q9FIS2"/>
<dbReference type="PaxDb" id="3702-AT5G62160.1"/>
<dbReference type="EnsemblPlants" id="AT5G62160.1">
    <property type="protein sequence ID" value="AT5G62160.1"/>
    <property type="gene ID" value="AT5G62160"/>
</dbReference>
<dbReference type="GeneID" id="836336"/>
<dbReference type="Gramene" id="AT5G62160.1">
    <property type="protein sequence ID" value="AT5G62160.1"/>
    <property type="gene ID" value="AT5G62160"/>
</dbReference>
<dbReference type="KEGG" id="ath:AT5G62160"/>
<dbReference type="Araport" id="AT5G62160"/>
<dbReference type="TAIR" id="AT5G62160">
    <property type="gene designation" value="ZIP12"/>
</dbReference>
<dbReference type="eggNOG" id="KOG1558">
    <property type="taxonomic scope" value="Eukaryota"/>
</dbReference>
<dbReference type="HOGENOM" id="CLU_027089_3_0_1"/>
<dbReference type="InParanoid" id="Q9FIS2"/>
<dbReference type="OMA" id="ISEYPWV"/>
<dbReference type="PhylomeDB" id="Q9FIS2"/>
<dbReference type="PRO" id="PR:Q9FIS2"/>
<dbReference type="Proteomes" id="UP000006548">
    <property type="component" value="Chromosome 5"/>
</dbReference>
<dbReference type="ExpressionAtlas" id="Q9FIS2">
    <property type="expression patterns" value="baseline and differential"/>
</dbReference>
<dbReference type="GO" id="GO:0005886">
    <property type="term" value="C:plasma membrane"/>
    <property type="evidence" value="ECO:0007669"/>
    <property type="project" value="UniProtKB-SubCell"/>
</dbReference>
<dbReference type="GO" id="GO:0005385">
    <property type="term" value="F:zinc ion transmembrane transporter activity"/>
    <property type="evidence" value="ECO:0007669"/>
    <property type="project" value="InterPro"/>
</dbReference>
<dbReference type="GO" id="GO:0071577">
    <property type="term" value="P:zinc ion transmembrane transport"/>
    <property type="evidence" value="ECO:0000315"/>
    <property type="project" value="UniProtKB"/>
</dbReference>
<dbReference type="InterPro" id="IPR003689">
    <property type="entry name" value="ZIP"/>
</dbReference>
<dbReference type="InterPro" id="IPR004698">
    <property type="entry name" value="Zn/Fe_permease_fun/pln"/>
</dbReference>
<dbReference type="NCBIfam" id="TIGR00820">
    <property type="entry name" value="zip"/>
    <property type="match status" value="1"/>
</dbReference>
<dbReference type="PANTHER" id="PTHR11040:SF164">
    <property type="entry name" value="ZINC TRANSPORTER 12-RELATED"/>
    <property type="match status" value="1"/>
</dbReference>
<dbReference type="PANTHER" id="PTHR11040">
    <property type="entry name" value="ZINC/IRON TRANSPORTER"/>
    <property type="match status" value="1"/>
</dbReference>
<dbReference type="Pfam" id="PF02535">
    <property type="entry name" value="Zip"/>
    <property type="match status" value="1"/>
</dbReference>
<name>ZIP12_ARATH</name>
<keyword id="KW-1003">Cell membrane</keyword>
<keyword id="KW-0406">Ion transport</keyword>
<keyword id="KW-0472">Membrane</keyword>
<keyword id="KW-1185">Reference proteome</keyword>
<keyword id="KW-0732">Signal</keyword>
<keyword id="KW-0812">Transmembrane</keyword>
<keyword id="KW-1133">Transmembrane helix</keyword>
<keyword id="KW-0813">Transport</keyword>
<keyword id="KW-0862">Zinc</keyword>
<keyword id="KW-0864">Zinc transport</keyword>
<accession>Q9FIS2</accession>
<reference key="1">
    <citation type="journal article" date="2001" name="Plant Physiol.">
        <title>Phylogenetic relationships within cation transporter families of Arabidopsis.</title>
        <authorList>
            <person name="Maeser P."/>
            <person name="Thomine S."/>
            <person name="Schroeder J.I."/>
            <person name="Ward J.M."/>
            <person name="Hirschi K."/>
            <person name="Sze H."/>
            <person name="Talke I.N."/>
            <person name="Amtmann A."/>
            <person name="Maathuis F.J.M."/>
            <person name="Sanders D."/>
            <person name="Harper J.F."/>
            <person name="Tchieu J."/>
            <person name="Gribskov M."/>
            <person name="Persans M.W."/>
            <person name="Salt D.E."/>
            <person name="Kim S.A."/>
            <person name="Guerinot M.L."/>
        </authorList>
    </citation>
    <scope>NUCLEOTIDE SEQUENCE [GENOMIC DNA]</scope>
</reference>
<reference key="2">
    <citation type="journal article" date="1998" name="DNA Res.">
        <title>Structural analysis of Arabidopsis thaliana chromosome 5. VII. Sequence features of the regions of 1,013,767 bp covered by sixteen physically assigned P1 and TAC clones.</title>
        <authorList>
            <person name="Nakamura Y."/>
            <person name="Sato S."/>
            <person name="Asamizu E."/>
            <person name="Kaneko T."/>
            <person name="Kotani H."/>
            <person name="Miyajima N."/>
            <person name="Tabata S."/>
        </authorList>
    </citation>
    <scope>NUCLEOTIDE SEQUENCE [LARGE SCALE GENOMIC DNA]</scope>
    <source>
        <strain>cv. Columbia</strain>
    </source>
</reference>
<reference key="3">
    <citation type="journal article" date="2017" name="Plant J.">
        <title>Araport11: a complete reannotation of the Arabidopsis thaliana reference genome.</title>
        <authorList>
            <person name="Cheng C.Y."/>
            <person name="Krishnakumar V."/>
            <person name="Chan A.P."/>
            <person name="Thibaud-Nissen F."/>
            <person name="Schobel S."/>
            <person name="Town C.D."/>
        </authorList>
    </citation>
    <scope>GENOME REANNOTATION</scope>
    <source>
        <strain>cv. Columbia</strain>
    </source>
</reference>
<reference key="4">
    <citation type="journal article" date="2015" name="Plant J.">
        <title>Identification of putative target genes of bZIP19, a transcription factor essential for Arabidopsis adaptation to Zn deficiency in roots.</title>
        <authorList>
            <person name="Inaba S."/>
            <person name="Kurata R."/>
            <person name="Kobayashi M."/>
            <person name="Yamagishi Y."/>
            <person name="Mori I."/>
            <person name="Ogata Y."/>
            <person name="Fukao Y."/>
        </authorList>
    </citation>
    <scope>FUNCTION</scope>
    <scope>INDUCTION</scope>
</reference>